<sequence>MALPSPASEEAEGPCQEANQEYQEPVCSPVPEPEPEPEPEPEPEPEPVPVPPPEPQPEPEPQPLPDPAPLPVLGFEAEPVQEPEPTPTVETRGTARGFQPPEGGFGWIVVFAATWCNGSIFGIHNSVGILYSMLLEEEKEKNRQVEFQAAWVGALAMGMIFFCSPIVSIFTDRLGCRITATTGAAVAFIGLHTSSFTSSLSLRYFTYGILFGCGCSFAFQPSLVILGHYFQRRLGLANGVVSAGSSIFSMSFPFLIKMLGDRIKLAQTFQVLSTFMFVLTLLSLTYRPLLPSSQDTPSKRGAHTLRQRFLVQFRKYFNMRVFRQRTYRIWAFGIAAAALGYFVPYVHLMKYVEDKFKEIKETWVLLVCIGATSGLGRLVSGHISDSIPGLKKIYLQVLSFLLLGLMSMMIPLCRDFGGLIVVCLFLGLCDGFFITIMAPIAFELVGPMQASQAIGYLLGMMALPMIAGPPIAGLLRNCFGNYHVAFYFAGVPPIIGAVILFFVPLMHQRMFKKEQRESSKDKMLSHDPDPNGELLPGSPTPEEPI</sequence>
<reference key="1">
    <citation type="journal article" date="2003" name="J. Biol. Chem.">
        <title>Identification of monocarboxylate transporter 8 as a specific thyroid hormone transporter.</title>
        <authorList>
            <person name="Friesema E.C.H."/>
            <person name="Ganguly S."/>
            <person name="Abdalla A."/>
            <person name="Manning Fox J.E."/>
            <person name="Halestrap A.P."/>
            <person name="Visser T.J."/>
        </authorList>
    </citation>
    <scope>NUCLEOTIDE SEQUENCE [MRNA]</scope>
    <scope>FUNCTION</scope>
    <scope>TRANSPORTER ACTIVITY</scope>
    <scope>SUBCELLULAR LOCATION</scope>
    <scope>TISSUE SPECIFICITY</scope>
    <scope>BIOPHYSICOCHEMICAL PROPERTIES</scope>
    <source>
        <strain>Sprague-Dawley</strain>
        <tissue>Liver</tissue>
    </source>
</reference>
<reference key="2">
    <citation type="journal article" date="2004" name="Nature">
        <title>Genome sequence of the Brown Norway rat yields insights into mammalian evolution.</title>
        <authorList>
            <person name="Gibbs R.A."/>
            <person name="Weinstock G.M."/>
            <person name="Metzker M.L."/>
            <person name="Muzny D.M."/>
            <person name="Sodergren E.J."/>
            <person name="Scherer S."/>
            <person name="Scott G."/>
            <person name="Steffen D."/>
            <person name="Worley K.C."/>
            <person name="Burch P.E."/>
            <person name="Okwuonu G."/>
            <person name="Hines S."/>
            <person name="Lewis L."/>
            <person name="Deramo C."/>
            <person name="Delgado O."/>
            <person name="Dugan-Rocha S."/>
            <person name="Miner G."/>
            <person name="Morgan M."/>
            <person name="Hawes A."/>
            <person name="Gill R."/>
            <person name="Holt R.A."/>
            <person name="Adams M.D."/>
            <person name="Amanatides P.G."/>
            <person name="Baden-Tillson H."/>
            <person name="Barnstead M."/>
            <person name="Chin S."/>
            <person name="Evans C.A."/>
            <person name="Ferriera S."/>
            <person name="Fosler C."/>
            <person name="Glodek A."/>
            <person name="Gu Z."/>
            <person name="Jennings D."/>
            <person name="Kraft C.L."/>
            <person name="Nguyen T."/>
            <person name="Pfannkoch C.M."/>
            <person name="Sitter C."/>
            <person name="Sutton G.G."/>
            <person name="Venter J.C."/>
            <person name="Woodage T."/>
            <person name="Smith D."/>
            <person name="Lee H.-M."/>
            <person name="Gustafson E."/>
            <person name="Cahill P."/>
            <person name="Kana A."/>
            <person name="Doucette-Stamm L."/>
            <person name="Weinstock K."/>
            <person name="Fechtel K."/>
            <person name="Weiss R.B."/>
            <person name="Dunn D.M."/>
            <person name="Green E.D."/>
            <person name="Blakesley R.W."/>
            <person name="Bouffard G.G."/>
            <person name="De Jong P.J."/>
            <person name="Osoegawa K."/>
            <person name="Zhu B."/>
            <person name="Marra M."/>
            <person name="Schein J."/>
            <person name="Bosdet I."/>
            <person name="Fjell C."/>
            <person name="Jones S."/>
            <person name="Krzywinski M."/>
            <person name="Mathewson C."/>
            <person name="Siddiqui A."/>
            <person name="Wye N."/>
            <person name="McPherson J."/>
            <person name="Zhao S."/>
            <person name="Fraser C.M."/>
            <person name="Shetty J."/>
            <person name="Shatsman S."/>
            <person name="Geer K."/>
            <person name="Chen Y."/>
            <person name="Abramzon S."/>
            <person name="Nierman W.C."/>
            <person name="Havlak P.H."/>
            <person name="Chen R."/>
            <person name="Durbin K.J."/>
            <person name="Egan A."/>
            <person name="Ren Y."/>
            <person name="Song X.-Z."/>
            <person name="Li B."/>
            <person name="Liu Y."/>
            <person name="Qin X."/>
            <person name="Cawley S."/>
            <person name="Cooney A.J."/>
            <person name="D'Souza L.M."/>
            <person name="Martin K."/>
            <person name="Wu J.Q."/>
            <person name="Gonzalez-Garay M.L."/>
            <person name="Jackson A.R."/>
            <person name="Kalafus K.J."/>
            <person name="McLeod M.P."/>
            <person name="Milosavljevic A."/>
            <person name="Virk D."/>
            <person name="Volkov A."/>
            <person name="Wheeler D.A."/>
            <person name="Zhang Z."/>
            <person name="Bailey J.A."/>
            <person name="Eichler E.E."/>
            <person name="Tuzun E."/>
            <person name="Birney E."/>
            <person name="Mongin E."/>
            <person name="Ureta-Vidal A."/>
            <person name="Woodwark C."/>
            <person name="Zdobnov E."/>
            <person name="Bork P."/>
            <person name="Suyama M."/>
            <person name="Torrents D."/>
            <person name="Alexandersson M."/>
            <person name="Trask B.J."/>
            <person name="Young J.M."/>
            <person name="Huang H."/>
            <person name="Wang H."/>
            <person name="Xing H."/>
            <person name="Daniels S."/>
            <person name="Gietzen D."/>
            <person name="Schmidt J."/>
            <person name="Stevens K."/>
            <person name="Vitt U."/>
            <person name="Wingrove J."/>
            <person name="Camara F."/>
            <person name="Mar Alba M."/>
            <person name="Abril J.F."/>
            <person name="Guigo R."/>
            <person name="Smit A."/>
            <person name="Dubchak I."/>
            <person name="Rubin E.M."/>
            <person name="Couronne O."/>
            <person name="Poliakov A."/>
            <person name="Huebner N."/>
            <person name="Ganten D."/>
            <person name="Goesele C."/>
            <person name="Hummel O."/>
            <person name="Kreitler T."/>
            <person name="Lee Y.-A."/>
            <person name="Monti J."/>
            <person name="Schulz H."/>
            <person name="Zimdahl H."/>
            <person name="Himmelbauer H."/>
            <person name="Lehrach H."/>
            <person name="Jacob H.J."/>
            <person name="Bromberg S."/>
            <person name="Gullings-Handley J."/>
            <person name="Jensen-Seaman M.I."/>
            <person name="Kwitek A.E."/>
            <person name="Lazar J."/>
            <person name="Pasko D."/>
            <person name="Tonellato P.J."/>
            <person name="Twigger S."/>
            <person name="Ponting C.P."/>
            <person name="Duarte J.M."/>
            <person name="Rice S."/>
            <person name="Goodstadt L."/>
            <person name="Beatson S.A."/>
            <person name="Emes R.D."/>
            <person name="Winter E.E."/>
            <person name="Webber C."/>
            <person name="Brandt P."/>
            <person name="Nyakatura G."/>
            <person name="Adetobi M."/>
            <person name="Chiaromonte F."/>
            <person name="Elnitski L."/>
            <person name="Eswara P."/>
            <person name="Hardison R.C."/>
            <person name="Hou M."/>
            <person name="Kolbe D."/>
            <person name="Makova K."/>
            <person name="Miller W."/>
            <person name="Nekrutenko A."/>
            <person name="Riemer C."/>
            <person name="Schwartz S."/>
            <person name="Taylor J."/>
            <person name="Yang S."/>
            <person name="Zhang Y."/>
            <person name="Lindpaintner K."/>
            <person name="Andrews T.D."/>
            <person name="Caccamo M."/>
            <person name="Clamp M."/>
            <person name="Clarke L."/>
            <person name="Curwen V."/>
            <person name="Durbin R.M."/>
            <person name="Eyras E."/>
            <person name="Searle S.M."/>
            <person name="Cooper G.M."/>
            <person name="Batzoglou S."/>
            <person name="Brudno M."/>
            <person name="Sidow A."/>
            <person name="Stone E.A."/>
            <person name="Payseur B.A."/>
            <person name="Bourque G."/>
            <person name="Lopez-Otin C."/>
            <person name="Puente X.S."/>
            <person name="Chakrabarti K."/>
            <person name="Chatterji S."/>
            <person name="Dewey C."/>
            <person name="Pachter L."/>
            <person name="Bray N."/>
            <person name="Yap V.B."/>
            <person name="Caspi A."/>
            <person name="Tesler G."/>
            <person name="Pevzner P.A."/>
            <person name="Haussler D."/>
            <person name="Roskin K.M."/>
            <person name="Baertsch R."/>
            <person name="Clawson H."/>
            <person name="Furey T.S."/>
            <person name="Hinrichs A.S."/>
            <person name="Karolchik D."/>
            <person name="Kent W.J."/>
            <person name="Rosenbloom K.R."/>
            <person name="Trumbower H."/>
            <person name="Weirauch M."/>
            <person name="Cooper D.N."/>
            <person name="Stenson P.D."/>
            <person name="Ma B."/>
            <person name="Brent M."/>
            <person name="Arumugam M."/>
            <person name="Shteynberg D."/>
            <person name="Copley R.R."/>
            <person name="Taylor M.S."/>
            <person name="Riethman H."/>
            <person name="Mudunuri U."/>
            <person name="Peterson J."/>
            <person name="Guyer M."/>
            <person name="Felsenfeld A."/>
            <person name="Old S."/>
            <person name="Mockrin S."/>
            <person name="Collins F.S."/>
        </authorList>
    </citation>
    <scope>NUCLEOTIDE SEQUENCE [LARGE SCALE GENOMIC DNA]</scope>
    <source>
        <strain>Brown Norway</strain>
    </source>
</reference>
<reference key="3">
    <citation type="submission" date="2005-09" db="EMBL/GenBank/DDBJ databases">
        <authorList>
            <person name="Mural R.J."/>
            <person name="Adams M.D."/>
            <person name="Myers E.W."/>
            <person name="Smith H.O."/>
            <person name="Venter J.C."/>
        </authorList>
    </citation>
    <scope>NUCLEOTIDE SEQUENCE [LARGE SCALE GENOMIC DNA]</scope>
</reference>
<reference key="4">
    <citation type="journal article" date="2008" name="Endocrinology">
        <title>Expression of the thyroid hormone transporters monocarboxylate transporter-8 (SLC16A2) and organic ion transporter-14 (SLCO1C1) at the blood-brain barrier.</title>
        <authorList>
            <person name="Roberts L.M."/>
            <person name="Woodford K."/>
            <person name="Zhou M."/>
            <person name="Black D.S."/>
            <person name="Haggerty J.E."/>
            <person name="Tate E.H."/>
            <person name="Grindstaff K.K."/>
            <person name="Mengesha W."/>
            <person name="Raman C."/>
            <person name="Zerangue N."/>
        </authorList>
    </citation>
    <scope>SUBCELLULAR LOCATION</scope>
    <scope>TISSUE SPECIFICITY</scope>
</reference>
<proteinExistence type="evidence at protein level"/>
<comment type="function">
    <text evidence="2 5">Specific thyroid hormone transmembrane transporter, that mediates both uptake and efflux of thyroid hormone across the cell membrane independently of pH or a Na(+) gradient. Major substrates are the iodothyronines T3 and T4 and to a lesser extent rT3 and 3,3-diiodothyronine (3,3'-T2) (PubMed:12871948). Acts as an important mediator of thyroid hormone transport, especially T3, through the blood-brain barrier (By similarity).</text>
</comment>
<comment type="catalytic activity">
    <reaction evidence="5">
        <text>3,3',5-triiodo-L-thyronine(out) = 3,3',5-triiodo-L-thyronine(in)</text>
        <dbReference type="Rhea" id="RHEA:71811"/>
        <dbReference type="ChEBI" id="CHEBI:533015"/>
    </reaction>
    <physiologicalReaction direction="left-to-right" evidence="2">
        <dbReference type="Rhea" id="RHEA:71812"/>
    </physiologicalReaction>
    <physiologicalReaction direction="right-to-left" evidence="2">
        <dbReference type="Rhea" id="RHEA:71813"/>
    </physiologicalReaction>
</comment>
<comment type="catalytic activity">
    <reaction evidence="5">
        <text>3,3',5'-triiodo-L-thyronine(out) = 3,3',5'-triiodo-L-thyronine(in)</text>
        <dbReference type="Rhea" id="RHEA:71815"/>
        <dbReference type="ChEBI" id="CHEBI:57261"/>
    </reaction>
    <physiologicalReaction direction="left-to-right" evidence="2">
        <dbReference type="Rhea" id="RHEA:71816"/>
    </physiologicalReaction>
    <physiologicalReaction direction="right-to-left" evidence="2">
        <dbReference type="Rhea" id="RHEA:71817"/>
    </physiologicalReaction>
</comment>
<comment type="catalytic activity">
    <reaction evidence="5">
        <text>L-thyroxine(out) = L-thyroxine(in)</text>
        <dbReference type="Rhea" id="RHEA:71819"/>
        <dbReference type="ChEBI" id="CHEBI:58448"/>
    </reaction>
    <physiologicalReaction direction="left-to-right" evidence="2">
        <dbReference type="Rhea" id="RHEA:71820"/>
    </physiologicalReaction>
    <physiologicalReaction direction="right-to-left" evidence="2">
        <dbReference type="Rhea" id="RHEA:71821"/>
    </physiologicalReaction>
</comment>
<comment type="catalytic activity">
    <reaction evidence="5">
        <text>3,3'-diiodo-L-thyronine(out) = 3,3'-diiodo-L-thyronine(in)</text>
        <dbReference type="Rhea" id="RHEA:71823"/>
        <dbReference type="ChEBI" id="CHEBI:176514"/>
    </reaction>
    <physiologicalReaction direction="left-to-right" evidence="2">
        <dbReference type="Rhea" id="RHEA:71824"/>
    </physiologicalReaction>
    <physiologicalReaction direction="right-to-left" evidence="2">
        <dbReference type="Rhea" id="RHEA:71825"/>
    </physiologicalReaction>
</comment>
<comment type="biophysicochemical properties">
    <kinetics>
        <KM evidence="5">4 uM for T3 (at 25 degrees Celsius)</KM>
        <KM evidence="5">2.2 uM for rT3 (at 25 degrees Celsius)</KM>
        <KM evidence="5">4.7 uM for T4 (at 25 degrees Celsius)</KM>
    </kinetics>
</comment>
<comment type="subunit">
    <text evidence="2">Monomer (By similarity). Homodimer (By similarity). Homooligomer (By similarity).</text>
</comment>
<comment type="subcellular location">
    <subcellularLocation>
        <location evidence="5 6">Cell membrane</location>
        <topology evidence="3">Multi-pass membrane protein</topology>
    </subcellularLocation>
    <subcellularLocation>
        <location evidence="6">Apical cell membrane</location>
        <topology evidence="3">Multi-pass membrane protein</topology>
    </subcellularLocation>
    <text evidence="6">Detected at the luminal and abluminal membrane surfaces of microvessels.</text>
</comment>
<comment type="tissue specificity">
    <text evidence="5 6">Expressed at highest levels in liver, lower levels in brain, kidney and heart (at protein level) (PubMed:12871948). Expressed in microvessels of the blood-brain barrier (BBB) (at protein level) (PubMed:18687783).</text>
</comment>
<comment type="similarity">
    <text evidence="7">Belongs to the major facilitator superfamily. Monocarboxylate porter (TC 2.A.1.13) family.</text>
</comment>
<accession>Q8K1P8</accession>
<accession>G3V9C2</accession>
<dbReference type="EMBL" id="AJ496570">
    <property type="protein sequence ID" value="CAD43059.1"/>
    <property type="molecule type" value="mRNA"/>
</dbReference>
<dbReference type="EMBL" id="AABR07039367">
    <property type="status" value="NOT_ANNOTATED_CDS"/>
    <property type="molecule type" value="Genomic_DNA"/>
</dbReference>
<dbReference type="EMBL" id="AABR07039368">
    <property type="status" value="NOT_ANNOTATED_CDS"/>
    <property type="molecule type" value="Genomic_DNA"/>
</dbReference>
<dbReference type="EMBL" id="AABR07039369">
    <property type="status" value="NOT_ANNOTATED_CDS"/>
    <property type="molecule type" value="Genomic_DNA"/>
</dbReference>
<dbReference type="EMBL" id="AABR07039370">
    <property type="status" value="NOT_ANNOTATED_CDS"/>
    <property type="molecule type" value="Genomic_DNA"/>
</dbReference>
<dbReference type="EMBL" id="AABR07039371">
    <property type="status" value="NOT_ANNOTATED_CDS"/>
    <property type="molecule type" value="Genomic_DNA"/>
</dbReference>
<dbReference type="EMBL" id="AABR07039372">
    <property type="status" value="NOT_ANNOTATED_CDS"/>
    <property type="molecule type" value="Genomic_DNA"/>
</dbReference>
<dbReference type="EMBL" id="AABR07039373">
    <property type="status" value="NOT_ANNOTATED_CDS"/>
    <property type="molecule type" value="Genomic_DNA"/>
</dbReference>
<dbReference type="EMBL" id="CH473969">
    <property type="protein sequence ID" value="EDM07172.1"/>
    <property type="molecule type" value="Genomic_DNA"/>
</dbReference>
<dbReference type="RefSeq" id="NP_671749.1">
    <property type="nucleotide sequence ID" value="NM_147216.1"/>
</dbReference>
<dbReference type="SMR" id="Q8K1P8"/>
<dbReference type="FunCoup" id="Q8K1P8">
    <property type="interactions" value="263"/>
</dbReference>
<dbReference type="STRING" id="10116.ENSRNOP00000042040"/>
<dbReference type="ChEMBL" id="CHEMBL2073720"/>
<dbReference type="GlyGen" id="Q8K1P8">
    <property type="glycosylation" value="2 sites"/>
</dbReference>
<dbReference type="PhosphoSitePlus" id="Q8K1P8"/>
<dbReference type="PaxDb" id="10116-ENSRNOP00000042040"/>
<dbReference type="Ensembl" id="ENSRNOT00000040637.4">
    <property type="protein sequence ID" value="ENSRNOP00000042040.2"/>
    <property type="gene ID" value="ENSRNOG00000002832.6"/>
</dbReference>
<dbReference type="GeneID" id="259248"/>
<dbReference type="KEGG" id="rno:259248"/>
<dbReference type="UCSC" id="RGD:628608">
    <property type="organism name" value="rat"/>
</dbReference>
<dbReference type="AGR" id="RGD:628608"/>
<dbReference type="CTD" id="6567"/>
<dbReference type="RGD" id="628608">
    <property type="gene designation" value="Slc16a2"/>
</dbReference>
<dbReference type="eggNOG" id="KOG2504">
    <property type="taxonomic scope" value="Eukaryota"/>
</dbReference>
<dbReference type="GeneTree" id="ENSGT00940000159450"/>
<dbReference type="InParanoid" id="Q8K1P8"/>
<dbReference type="OMA" id="AWCNGSI"/>
<dbReference type="OrthoDB" id="6499973at2759"/>
<dbReference type="PhylomeDB" id="Q8K1P8"/>
<dbReference type="Reactome" id="R-RNO-879518">
    <property type="pathway name" value="Transport of organic anions"/>
</dbReference>
<dbReference type="SABIO-RK" id="Q8K1P8"/>
<dbReference type="PRO" id="PR:Q8K1P8"/>
<dbReference type="Proteomes" id="UP000002494">
    <property type="component" value="Chromosome X"/>
</dbReference>
<dbReference type="Proteomes" id="UP000234681">
    <property type="component" value="Chromosome x"/>
</dbReference>
<dbReference type="Bgee" id="ENSRNOG00000002832">
    <property type="expression patterns" value="Expressed in liver and 17 other cell types or tissues"/>
</dbReference>
<dbReference type="GO" id="GO:0016324">
    <property type="term" value="C:apical plasma membrane"/>
    <property type="evidence" value="ECO:0000314"/>
    <property type="project" value="UniProtKB"/>
</dbReference>
<dbReference type="GO" id="GO:0005886">
    <property type="term" value="C:plasma membrane"/>
    <property type="evidence" value="ECO:0000314"/>
    <property type="project" value="ARUK-UCL"/>
</dbReference>
<dbReference type="GO" id="GO:0015171">
    <property type="term" value="F:amino acid transmembrane transporter activity"/>
    <property type="evidence" value="ECO:0000266"/>
    <property type="project" value="RGD"/>
</dbReference>
<dbReference type="GO" id="GO:0042802">
    <property type="term" value="F:identical protein binding"/>
    <property type="evidence" value="ECO:0000250"/>
    <property type="project" value="UniProtKB"/>
</dbReference>
<dbReference type="GO" id="GO:0015349">
    <property type="term" value="F:thyroid hormone transmembrane transporter activity"/>
    <property type="evidence" value="ECO:0000315"/>
    <property type="project" value="RGD"/>
</dbReference>
<dbReference type="GO" id="GO:0089718">
    <property type="term" value="P:amino acid import across plasma membrane"/>
    <property type="evidence" value="ECO:0000266"/>
    <property type="project" value="RGD"/>
</dbReference>
<dbReference type="GO" id="GO:0006520">
    <property type="term" value="P:amino acid metabolic process"/>
    <property type="evidence" value="ECO:0000266"/>
    <property type="project" value="RGD"/>
</dbReference>
<dbReference type="GO" id="GO:0009914">
    <property type="term" value="P:hormone transport"/>
    <property type="evidence" value="ECO:0000315"/>
    <property type="project" value="RGD"/>
</dbReference>
<dbReference type="GO" id="GO:2000178">
    <property type="term" value="P:negative regulation of neural precursor cell proliferation"/>
    <property type="evidence" value="ECO:0000266"/>
    <property type="project" value="RGD"/>
</dbReference>
<dbReference type="GO" id="GO:0006590">
    <property type="term" value="P:thyroid hormone generation"/>
    <property type="evidence" value="ECO:0000266"/>
    <property type="project" value="RGD"/>
</dbReference>
<dbReference type="GO" id="GO:0042403">
    <property type="term" value="P:thyroid hormone metabolic process"/>
    <property type="evidence" value="ECO:0000266"/>
    <property type="project" value="RGD"/>
</dbReference>
<dbReference type="GO" id="GO:0070327">
    <property type="term" value="P:thyroid hormone transport"/>
    <property type="evidence" value="ECO:0000250"/>
    <property type="project" value="UniProtKB"/>
</dbReference>
<dbReference type="GO" id="GO:0070460">
    <property type="term" value="P:thyroid-stimulating hormone secretion"/>
    <property type="evidence" value="ECO:0000266"/>
    <property type="project" value="RGD"/>
</dbReference>
<dbReference type="GO" id="GO:0150104">
    <property type="term" value="P:transport across blood-brain barrier"/>
    <property type="evidence" value="ECO:0000266"/>
    <property type="project" value="RGD"/>
</dbReference>
<dbReference type="CDD" id="cd17420">
    <property type="entry name" value="MFS_MCT8_10"/>
    <property type="match status" value="1"/>
</dbReference>
<dbReference type="FunFam" id="1.20.1250.20:FF:000156">
    <property type="entry name" value="monocarboxylate transporter 8 isoform X1"/>
    <property type="match status" value="1"/>
</dbReference>
<dbReference type="FunFam" id="1.20.1250.20:FF:000179">
    <property type="entry name" value="Solute carrier family 16 member 2"/>
    <property type="match status" value="1"/>
</dbReference>
<dbReference type="Gene3D" id="1.20.1250.20">
    <property type="entry name" value="MFS general substrate transporter like domains"/>
    <property type="match status" value="2"/>
</dbReference>
<dbReference type="InterPro" id="IPR011701">
    <property type="entry name" value="MFS"/>
</dbReference>
<dbReference type="InterPro" id="IPR020846">
    <property type="entry name" value="MFS_dom"/>
</dbReference>
<dbReference type="InterPro" id="IPR036259">
    <property type="entry name" value="MFS_trans_sf"/>
</dbReference>
<dbReference type="InterPro" id="IPR050327">
    <property type="entry name" value="Proton-linked_MCT"/>
</dbReference>
<dbReference type="PANTHER" id="PTHR11360">
    <property type="entry name" value="MONOCARBOXYLATE TRANSPORTER"/>
    <property type="match status" value="1"/>
</dbReference>
<dbReference type="PANTHER" id="PTHR11360:SF123">
    <property type="entry name" value="MONOCARBOXYLATE TRANSPORTER 8"/>
    <property type="match status" value="1"/>
</dbReference>
<dbReference type="Pfam" id="PF07690">
    <property type="entry name" value="MFS_1"/>
    <property type="match status" value="1"/>
</dbReference>
<dbReference type="SUPFAM" id="SSF103473">
    <property type="entry name" value="MFS general substrate transporter"/>
    <property type="match status" value="1"/>
</dbReference>
<dbReference type="PROSITE" id="PS50850">
    <property type="entry name" value="MFS"/>
    <property type="match status" value="1"/>
</dbReference>
<protein>
    <recommendedName>
        <fullName>Monocarboxylate transporter 8</fullName>
        <shortName>MCT 8</shortName>
    </recommendedName>
    <alternativeName>
        <fullName>Solute carrier family 16 member 2</fullName>
    </alternativeName>
</protein>
<keyword id="KW-0007">Acetylation</keyword>
<keyword id="KW-1003">Cell membrane</keyword>
<keyword id="KW-0472">Membrane</keyword>
<keyword id="KW-0597">Phosphoprotein</keyword>
<keyword id="KW-1185">Reference proteome</keyword>
<keyword id="KW-0677">Repeat</keyword>
<keyword id="KW-0812">Transmembrane</keyword>
<keyword id="KW-1133">Transmembrane helix</keyword>
<keyword id="KW-0813">Transport</keyword>
<organism>
    <name type="scientific">Rattus norvegicus</name>
    <name type="common">Rat</name>
    <dbReference type="NCBI Taxonomy" id="10116"/>
    <lineage>
        <taxon>Eukaryota</taxon>
        <taxon>Metazoa</taxon>
        <taxon>Chordata</taxon>
        <taxon>Craniata</taxon>
        <taxon>Vertebrata</taxon>
        <taxon>Euteleostomi</taxon>
        <taxon>Mammalia</taxon>
        <taxon>Eutheria</taxon>
        <taxon>Euarchontoglires</taxon>
        <taxon>Glires</taxon>
        <taxon>Rodentia</taxon>
        <taxon>Myomorpha</taxon>
        <taxon>Muroidea</taxon>
        <taxon>Muridae</taxon>
        <taxon>Murinae</taxon>
        <taxon>Rattus</taxon>
    </lineage>
</organism>
<gene>
    <name type="primary">SLC16A2</name>
    <name type="synonym">Mct8</name>
</gene>
<evidence type="ECO:0000250" key="1">
    <source>
        <dbReference type="UniProtKB" id="O70324"/>
    </source>
</evidence>
<evidence type="ECO:0000250" key="2">
    <source>
        <dbReference type="UniProtKB" id="P36021"/>
    </source>
</evidence>
<evidence type="ECO:0000255" key="3"/>
<evidence type="ECO:0000256" key="4">
    <source>
        <dbReference type="SAM" id="MobiDB-lite"/>
    </source>
</evidence>
<evidence type="ECO:0000269" key="5">
    <source>
    </source>
</evidence>
<evidence type="ECO:0000269" key="6">
    <source>
    </source>
</evidence>
<evidence type="ECO:0000305" key="7"/>
<name>MOT8_RAT</name>
<feature type="initiator methionine" description="Removed" evidence="2">
    <location>
        <position position="1"/>
    </location>
</feature>
<feature type="chain" id="PRO_0000247988" description="Monocarboxylate transporter 8">
    <location>
        <begin position="2"/>
        <end position="545"/>
    </location>
</feature>
<feature type="topological domain" description="Cytoplasmic" evidence="7">
    <location>
        <begin position="2"/>
        <end position="102"/>
    </location>
</feature>
<feature type="transmembrane region" description="Helical; Name=1" evidence="3">
    <location>
        <begin position="103"/>
        <end position="123"/>
    </location>
</feature>
<feature type="topological domain" description="Extracellular" evidence="7">
    <location>
        <begin position="124"/>
        <end position="149"/>
    </location>
</feature>
<feature type="transmembrane region" description="Helical; Name=2" evidence="3">
    <location>
        <begin position="150"/>
        <end position="170"/>
    </location>
</feature>
<feature type="topological domain" description="Cytoplasmic" evidence="7">
    <location>
        <begin position="171"/>
        <end position="181"/>
    </location>
</feature>
<feature type="transmembrane region" description="Helical; Name=3" evidence="3">
    <location>
        <begin position="182"/>
        <end position="202"/>
    </location>
</feature>
<feature type="topological domain" description="Extracellular" evidence="7">
    <location>
        <begin position="203"/>
        <end position="204"/>
    </location>
</feature>
<feature type="transmembrane region" description="Helical; Name=4" evidence="3">
    <location>
        <begin position="205"/>
        <end position="225"/>
    </location>
</feature>
<feature type="topological domain" description="Cytoplasmic" evidence="7">
    <location>
        <begin position="226"/>
        <end position="235"/>
    </location>
</feature>
<feature type="transmembrane region" description="Helical; Name=5" evidence="3">
    <location>
        <begin position="236"/>
        <end position="256"/>
    </location>
</feature>
<feature type="topological domain" description="Extracellular" evidence="7">
    <location>
        <begin position="257"/>
        <end position="264"/>
    </location>
</feature>
<feature type="transmembrane region" description="Helical; Name=6" evidence="3">
    <location>
        <begin position="265"/>
        <end position="285"/>
    </location>
</feature>
<feature type="topological domain" description="Cytoplasmic" evidence="7">
    <location>
        <begin position="286"/>
        <end position="328"/>
    </location>
</feature>
<feature type="transmembrane region" description="Helical; Name=7" evidence="3">
    <location>
        <begin position="329"/>
        <end position="349"/>
    </location>
</feature>
<feature type="topological domain" description="Extracellular" evidence="7">
    <location>
        <begin position="350"/>
        <end position="362"/>
    </location>
</feature>
<feature type="transmembrane region" description="Helical; Name=8" evidence="3">
    <location>
        <begin position="363"/>
        <end position="383"/>
    </location>
</feature>
<feature type="topological domain" description="Cytoplasmic" evidence="7">
    <location>
        <begin position="384"/>
        <end position="392"/>
    </location>
</feature>
<feature type="transmembrane region" description="Helical; Name=9" evidence="3">
    <location>
        <begin position="393"/>
        <end position="413"/>
    </location>
</feature>
<feature type="topological domain" description="Extracellular" evidence="7">
    <location>
        <begin position="414"/>
        <end position="415"/>
    </location>
</feature>
<feature type="transmembrane region" description="Helical; Name=10" evidence="3">
    <location>
        <begin position="416"/>
        <end position="436"/>
    </location>
</feature>
<feature type="topological domain" description="Cytoplasmic" evidence="7">
    <location>
        <begin position="437"/>
        <end position="453"/>
    </location>
</feature>
<feature type="transmembrane region" description="Helical; Name=11" evidence="3">
    <location>
        <begin position="454"/>
        <end position="474"/>
    </location>
</feature>
<feature type="topological domain" description="Extracellular" evidence="7">
    <location>
        <begin position="475"/>
        <end position="483"/>
    </location>
</feature>
<feature type="transmembrane region" description="Helical; Name=12" evidence="3">
    <location>
        <begin position="484"/>
        <end position="504"/>
    </location>
</feature>
<feature type="topological domain" description="Cytoplasmic" evidence="3">
    <location>
        <begin position="505"/>
        <end position="545"/>
    </location>
</feature>
<feature type="repeat" description="1">
    <location>
        <begin position="29"/>
        <end position="50"/>
    </location>
</feature>
<feature type="repeat" description="2">
    <location>
        <begin position="51"/>
        <end position="72"/>
    </location>
</feature>
<feature type="region of interest" description="Disordered" evidence="4">
    <location>
        <begin position="1"/>
        <end position="98"/>
    </location>
</feature>
<feature type="region of interest" description="2 X 22 AA approximate tandem repeats">
    <location>
        <begin position="29"/>
        <end position="72"/>
    </location>
</feature>
<feature type="region of interest" description="Disordered" evidence="4">
    <location>
        <begin position="514"/>
        <end position="545"/>
    </location>
</feature>
<feature type="compositionally biased region" description="Acidic residues" evidence="4">
    <location>
        <begin position="33"/>
        <end position="45"/>
    </location>
</feature>
<feature type="compositionally biased region" description="Pro residues" evidence="4">
    <location>
        <begin position="46"/>
        <end position="70"/>
    </location>
</feature>
<feature type="compositionally biased region" description="Basic and acidic residues" evidence="4">
    <location>
        <begin position="514"/>
        <end position="529"/>
    </location>
</feature>
<feature type="modified residue" description="N-acetylalanine" evidence="2">
    <location>
        <position position="2"/>
    </location>
</feature>
<feature type="modified residue" description="Phosphothreonine" evidence="1">
    <location>
        <position position="540"/>
    </location>
</feature>
<feature type="sequence conflict" description="In Ref. 1; CAD43059." ref="1">
    <original>S</original>
    <variation>P</variation>
    <location>
        <position position="199"/>
    </location>
</feature>
<feature type="sequence conflict" description="In Ref. 1; CAD43059." ref="1">
    <original>G</original>
    <variation>D</variation>
    <location>
        <position position="227"/>
    </location>
</feature>